<gene>
    <name type="primary">DUSP29</name>
    <name type="synonym">DUPD1</name>
</gene>
<name>DUS29_PIG</name>
<accession>P0C596</accession>
<reference key="1">
    <citation type="submission" date="2007-01" db="EMBL/GenBank/DDBJ databases">
        <authorList>
            <consortium name="Porcine genome sequencing project"/>
        </authorList>
    </citation>
    <scope>NUCLEOTIDE SEQUENCE [LARGE SCALE GENOMIC DNA]</scope>
</reference>
<protein>
    <recommendedName>
        <fullName>Dual specificity phosphatase 29</fullName>
    </recommendedName>
    <alternativeName>
        <fullName>Dual specificity phosphatase DUPD1</fullName>
        <ecNumber evidence="1">3.1.3.16</ecNumber>
        <ecNumber evidence="1">3.1.3.48</ecNumber>
    </alternativeName>
</protein>
<evidence type="ECO:0000250" key="1">
    <source>
        <dbReference type="UniProtKB" id="Q68J44"/>
    </source>
</evidence>
<evidence type="ECO:0000250" key="2">
    <source>
        <dbReference type="UniProtKB" id="Q8BK84"/>
    </source>
</evidence>
<evidence type="ECO:0000255" key="3">
    <source>
        <dbReference type="PROSITE-ProRule" id="PRU00160"/>
    </source>
</evidence>
<evidence type="ECO:0000256" key="4">
    <source>
        <dbReference type="SAM" id="MobiDB-lite"/>
    </source>
</evidence>
<evidence type="ECO:0000305" key="5"/>
<keyword id="KW-0963">Cytoplasm</keyword>
<keyword id="KW-0378">Hydrolase</keyword>
<keyword id="KW-0539">Nucleus</keyword>
<keyword id="KW-0904">Protein phosphatase</keyword>
<keyword id="KW-1185">Reference proteome</keyword>
<organism>
    <name type="scientific">Sus scrofa</name>
    <name type="common">Pig</name>
    <dbReference type="NCBI Taxonomy" id="9823"/>
    <lineage>
        <taxon>Eukaryota</taxon>
        <taxon>Metazoa</taxon>
        <taxon>Chordata</taxon>
        <taxon>Craniata</taxon>
        <taxon>Vertebrata</taxon>
        <taxon>Euteleostomi</taxon>
        <taxon>Mammalia</taxon>
        <taxon>Eutheria</taxon>
        <taxon>Laurasiatheria</taxon>
        <taxon>Artiodactyla</taxon>
        <taxon>Suina</taxon>
        <taxon>Suidae</taxon>
        <taxon>Sus</taxon>
    </lineage>
</organism>
<comment type="function">
    <text evidence="1 2">Dual specificity phosphatase able to dephosphorylate phosphotyrosine, phosphoserine and phosphothreonine residues within the same substrate, with a preference for phosphotyrosine as a substrate (By similarity). Involved in the modulation of intracellular signaling cascades. In skeletal muscle regulates systemic glucose homeostasis by activating, AMPK, an energy sensor protein kinase. Affects MAP kinase signaling though modulation of the MAPK1/2 cascade in skeletal muscle promoting muscle cell differentiation, development and atrophy (By similarity).</text>
</comment>
<comment type="catalytic activity">
    <reaction evidence="1">
        <text>O-phospho-L-tyrosyl-[protein] + H2O = L-tyrosyl-[protein] + phosphate</text>
        <dbReference type="Rhea" id="RHEA:10684"/>
        <dbReference type="Rhea" id="RHEA-COMP:10136"/>
        <dbReference type="Rhea" id="RHEA-COMP:20101"/>
        <dbReference type="ChEBI" id="CHEBI:15377"/>
        <dbReference type="ChEBI" id="CHEBI:43474"/>
        <dbReference type="ChEBI" id="CHEBI:46858"/>
        <dbReference type="ChEBI" id="CHEBI:61978"/>
        <dbReference type="EC" id="3.1.3.48"/>
    </reaction>
</comment>
<comment type="catalytic activity">
    <reaction evidence="1">
        <text>O-phospho-L-seryl-[protein] + H2O = L-seryl-[protein] + phosphate</text>
        <dbReference type="Rhea" id="RHEA:20629"/>
        <dbReference type="Rhea" id="RHEA-COMP:9863"/>
        <dbReference type="Rhea" id="RHEA-COMP:11604"/>
        <dbReference type="ChEBI" id="CHEBI:15377"/>
        <dbReference type="ChEBI" id="CHEBI:29999"/>
        <dbReference type="ChEBI" id="CHEBI:43474"/>
        <dbReference type="ChEBI" id="CHEBI:83421"/>
        <dbReference type="EC" id="3.1.3.16"/>
    </reaction>
</comment>
<comment type="catalytic activity">
    <reaction evidence="1">
        <text>O-phospho-L-threonyl-[protein] + H2O = L-threonyl-[protein] + phosphate</text>
        <dbReference type="Rhea" id="RHEA:47004"/>
        <dbReference type="Rhea" id="RHEA-COMP:11060"/>
        <dbReference type="Rhea" id="RHEA-COMP:11605"/>
        <dbReference type="ChEBI" id="CHEBI:15377"/>
        <dbReference type="ChEBI" id="CHEBI:30013"/>
        <dbReference type="ChEBI" id="CHEBI:43474"/>
        <dbReference type="ChEBI" id="CHEBI:61977"/>
        <dbReference type="EC" id="3.1.3.16"/>
    </reaction>
</comment>
<comment type="subunit">
    <text evidence="1 2">Homodimer (By similarity). Interacts with PRKAA2 (By similarity).</text>
</comment>
<comment type="subcellular location">
    <subcellularLocation>
        <location evidence="1">Cytoplasm</location>
    </subcellularLocation>
    <subcellularLocation>
        <location evidence="2">Nucleus</location>
    </subcellularLocation>
</comment>
<comment type="similarity">
    <text evidence="5">Belongs to the protein-tyrosine phosphatase family. Non-receptor class dual specificity subfamily.</text>
</comment>
<feature type="chain" id="PRO_0000295882" description="Dual specificity phosphatase 29">
    <location>
        <begin position="1"/>
        <end position="222"/>
    </location>
</feature>
<feature type="domain" description="Tyrosine-protein phosphatase" evidence="3">
    <location>
        <begin position="54"/>
        <end position="202"/>
    </location>
</feature>
<feature type="region of interest" description="Disordered" evidence="4">
    <location>
        <begin position="201"/>
        <end position="222"/>
    </location>
</feature>
<feature type="compositionally biased region" description="Basic and acidic residues" evidence="4">
    <location>
        <begin position="209"/>
        <end position="222"/>
    </location>
</feature>
<feature type="active site" description="Phosphocysteine intermediate" evidence="3">
    <location>
        <position position="147"/>
    </location>
</feature>
<feature type="binding site" evidence="1">
    <location>
        <begin position="146"/>
        <end position="153"/>
    </location>
    <ligand>
        <name>substrate</name>
    </ligand>
</feature>
<proteinExistence type="inferred from homology"/>
<dbReference type="EC" id="3.1.3.16" evidence="1"/>
<dbReference type="EC" id="3.1.3.48" evidence="1"/>
<dbReference type="EMBL" id="CT737343">
    <property type="status" value="NOT_ANNOTATED_CDS"/>
    <property type="molecule type" value="Genomic_DNA"/>
</dbReference>
<dbReference type="SMR" id="P0C596"/>
<dbReference type="FunCoup" id="P0C596">
    <property type="interactions" value="126"/>
</dbReference>
<dbReference type="STRING" id="9823.ENSSSCP00000031343"/>
<dbReference type="PaxDb" id="9823-ENSSSCP00000011002"/>
<dbReference type="eggNOG" id="KOG1716">
    <property type="taxonomic scope" value="Eukaryota"/>
</dbReference>
<dbReference type="InParanoid" id="P0C596"/>
<dbReference type="Proteomes" id="UP000008227">
    <property type="component" value="Unplaced"/>
</dbReference>
<dbReference type="Proteomes" id="UP000314985">
    <property type="component" value="Unplaced"/>
</dbReference>
<dbReference type="Proteomes" id="UP000694570">
    <property type="component" value="Unplaced"/>
</dbReference>
<dbReference type="Proteomes" id="UP000694571">
    <property type="component" value="Unplaced"/>
</dbReference>
<dbReference type="Proteomes" id="UP000694720">
    <property type="component" value="Unplaced"/>
</dbReference>
<dbReference type="Proteomes" id="UP000694722">
    <property type="component" value="Unplaced"/>
</dbReference>
<dbReference type="Proteomes" id="UP000694723">
    <property type="component" value="Unplaced"/>
</dbReference>
<dbReference type="Proteomes" id="UP000694724">
    <property type="component" value="Unplaced"/>
</dbReference>
<dbReference type="Proteomes" id="UP000694725">
    <property type="component" value="Unplaced"/>
</dbReference>
<dbReference type="Proteomes" id="UP000694726">
    <property type="component" value="Unplaced"/>
</dbReference>
<dbReference type="Proteomes" id="UP000694727">
    <property type="component" value="Unplaced"/>
</dbReference>
<dbReference type="Proteomes" id="UP000694728">
    <property type="component" value="Unplaced"/>
</dbReference>
<dbReference type="GO" id="GO:0005737">
    <property type="term" value="C:cytoplasm"/>
    <property type="evidence" value="ECO:0000250"/>
    <property type="project" value="UniProtKB"/>
</dbReference>
<dbReference type="GO" id="GO:0005634">
    <property type="term" value="C:nucleus"/>
    <property type="evidence" value="ECO:0000250"/>
    <property type="project" value="UniProtKB"/>
</dbReference>
<dbReference type="GO" id="GO:0033549">
    <property type="term" value="F:MAP kinase phosphatase activity"/>
    <property type="evidence" value="ECO:0000250"/>
    <property type="project" value="UniProtKB"/>
</dbReference>
<dbReference type="GO" id="GO:0004722">
    <property type="term" value="F:protein serine/threonine phosphatase activity"/>
    <property type="evidence" value="ECO:0007669"/>
    <property type="project" value="UniProtKB-EC"/>
</dbReference>
<dbReference type="GO" id="GO:0004725">
    <property type="term" value="F:protein tyrosine phosphatase activity"/>
    <property type="evidence" value="ECO:0007669"/>
    <property type="project" value="UniProtKB-EC"/>
</dbReference>
<dbReference type="GO" id="GO:0008138">
    <property type="term" value="F:protein tyrosine/serine/threonine phosphatase activity"/>
    <property type="evidence" value="ECO:0000250"/>
    <property type="project" value="UniProtKB"/>
</dbReference>
<dbReference type="GO" id="GO:0042692">
    <property type="term" value="P:muscle cell differentiation"/>
    <property type="evidence" value="ECO:0000250"/>
    <property type="project" value="UniProtKB"/>
</dbReference>
<dbReference type="GO" id="GO:0070373">
    <property type="term" value="P:negative regulation of ERK1 and ERK2 cascade"/>
    <property type="evidence" value="ECO:0000250"/>
    <property type="project" value="UniProtKB"/>
</dbReference>
<dbReference type="GO" id="GO:0043409">
    <property type="term" value="P:negative regulation of MAPK cascade"/>
    <property type="evidence" value="ECO:0000318"/>
    <property type="project" value="GO_Central"/>
</dbReference>
<dbReference type="GO" id="GO:0006470">
    <property type="term" value="P:protein dephosphorylation"/>
    <property type="evidence" value="ECO:0000250"/>
    <property type="project" value="UniProtKB"/>
</dbReference>
<dbReference type="CDD" id="cd14575">
    <property type="entry name" value="DUPD1"/>
    <property type="match status" value="1"/>
</dbReference>
<dbReference type="FunFam" id="3.90.190.10:FF:000037">
    <property type="entry name" value="dual specificity protein phosphatase 26"/>
    <property type="match status" value="1"/>
</dbReference>
<dbReference type="Gene3D" id="3.90.190.10">
    <property type="entry name" value="Protein tyrosine phosphatase superfamily"/>
    <property type="match status" value="1"/>
</dbReference>
<dbReference type="InterPro" id="IPR020405">
    <property type="entry name" value="Atypical_DUSP_subfamA"/>
</dbReference>
<dbReference type="InterPro" id="IPR000340">
    <property type="entry name" value="Dual-sp_phosphatase_cat-dom"/>
</dbReference>
<dbReference type="InterPro" id="IPR029021">
    <property type="entry name" value="Prot-tyrosine_phosphatase-like"/>
</dbReference>
<dbReference type="InterPro" id="IPR016130">
    <property type="entry name" value="Tyr_Pase_AS"/>
</dbReference>
<dbReference type="InterPro" id="IPR000387">
    <property type="entry name" value="Tyr_Pase_dom"/>
</dbReference>
<dbReference type="InterPro" id="IPR020422">
    <property type="entry name" value="TYR_PHOSPHATASE_DUAL_dom"/>
</dbReference>
<dbReference type="PANTHER" id="PTHR45682">
    <property type="entry name" value="AGAP008228-PA"/>
    <property type="match status" value="1"/>
</dbReference>
<dbReference type="PANTHER" id="PTHR45682:SF6">
    <property type="entry name" value="DUAL SPECIFICITY PHOSPHATASE 29"/>
    <property type="match status" value="1"/>
</dbReference>
<dbReference type="Pfam" id="PF00782">
    <property type="entry name" value="DSPc"/>
    <property type="match status" value="1"/>
</dbReference>
<dbReference type="PRINTS" id="PR01908">
    <property type="entry name" value="ADSPHPHTASE"/>
</dbReference>
<dbReference type="PRINTS" id="PR01909">
    <property type="entry name" value="ADSPHPHTASEA"/>
</dbReference>
<dbReference type="SMART" id="SM00195">
    <property type="entry name" value="DSPc"/>
    <property type="match status" value="1"/>
</dbReference>
<dbReference type="SUPFAM" id="SSF52799">
    <property type="entry name" value="(Phosphotyrosine protein) phosphatases II"/>
    <property type="match status" value="1"/>
</dbReference>
<dbReference type="PROSITE" id="PS00383">
    <property type="entry name" value="TYR_PHOSPHATASE_1"/>
    <property type="match status" value="1"/>
</dbReference>
<dbReference type="PROSITE" id="PS50056">
    <property type="entry name" value="TYR_PHOSPHATASE_2"/>
    <property type="match status" value="1"/>
</dbReference>
<dbReference type="PROSITE" id="PS50054">
    <property type="entry name" value="TYR_PHOSPHATASE_DUAL"/>
    <property type="match status" value="1"/>
</dbReference>
<sequence>MTSGESKTSLKNAYPAAKKLLPKVEEEGEAEEYCTPGAFELERLFWKGSPQYTHVNEVWPKLYIGDEATALDRYGLQKAGFTHVLNAAHGRWNVDTGPDYYRDMAIEYHGVEADDLPTFDLSIFFYPAAAFIDAALRYEHSKILVHCAMGRSRSATLVLAYLMIHRNMTLVDAIRQVAKNRCVLPNRGFLKQLRELDKQLVQQRRGAQHRGEAGEKAGEKEP</sequence>